<organism>
    <name type="scientific">Xenopus laevis</name>
    <name type="common">African clawed frog</name>
    <dbReference type="NCBI Taxonomy" id="8355"/>
    <lineage>
        <taxon>Eukaryota</taxon>
        <taxon>Metazoa</taxon>
        <taxon>Chordata</taxon>
        <taxon>Craniata</taxon>
        <taxon>Vertebrata</taxon>
        <taxon>Euteleostomi</taxon>
        <taxon>Amphibia</taxon>
        <taxon>Batrachia</taxon>
        <taxon>Anura</taxon>
        <taxon>Pipoidea</taxon>
        <taxon>Pipidae</taxon>
        <taxon>Xenopodinae</taxon>
        <taxon>Xenopus</taxon>
        <taxon>Xenopus</taxon>
    </lineage>
</organism>
<dbReference type="EC" id="2.7.11.22"/>
<dbReference type="EC" id="2.7.11.23"/>
<dbReference type="EMBL" id="BC045247">
    <property type="protein sequence ID" value="AAH45247.1"/>
    <property type="molecule type" value="mRNA"/>
</dbReference>
<dbReference type="RefSeq" id="NP_001080537.1">
    <property type="nucleotide sequence ID" value="NM_001087068.1"/>
</dbReference>
<dbReference type="SMR" id="Q7ZX42"/>
<dbReference type="IntAct" id="Q7ZX42">
    <property type="interactions" value="1"/>
</dbReference>
<dbReference type="DNASU" id="380229"/>
<dbReference type="GeneID" id="380229"/>
<dbReference type="KEGG" id="xla:380229"/>
<dbReference type="AGR" id="Xenbase:XB-GENE-6256565"/>
<dbReference type="CTD" id="380229"/>
<dbReference type="Xenbase" id="XB-GENE-6256565">
    <property type="gene designation" value="cdk9.L"/>
</dbReference>
<dbReference type="OrthoDB" id="204883at2759"/>
<dbReference type="Proteomes" id="UP000186698">
    <property type="component" value="Chromosome 8L"/>
</dbReference>
<dbReference type="Bgee" id="380229">
    <property type="expression patterns" value="Expressed in gastrula and 19 other cell types or tissues"/>
</dbReference>
<dbReference type="GO" id="GO:0005634">
    <property type="term" value="C:nucleus"/>
    <property type="evidence" value="ECO:0000318"/>
    <property type="project" value="GO_Central"/>
</dbReference>
<dbReference type="GO" id="GO:0070691">
    <property type="term" value="C:P-TEFb complex"/>
    <property type="evidence" value="ECO:0000250"/>
    <property type="project" value="UniProtKB"/>
</dbReference>
<dbReference type="GO" id="GO:0005524">
    <property type="term" value="F:ATP binding"/>
    <property type="evidence" value="ECO:0007669"/>
    <property type="project" value="UniProtKB-KW"/>
</dbReference>
<dbReference type="GO" id="GO:0004693">
    <property type="term" value="F:cyclin-dependent protein serine/threonine kinase activity"/>
    <property type="evidence" value="ECO:0000318"/>
    <property type="project" value="GO_Central"/>
</dbReference>
<dbReference type="GO" id="GO:0106310">
    <property type="term" value="F:protein serine kinase activity"/>
    <property type="evidence" value="ECO:0007669"/>
    <property type="project" value="RHEA"/>
</dbReference>
<dbReference type="GO" id="GO:0004674">
    <property type="term" value="F:protein serine/threonine kinase activity"/>
    <property type="evidence" value="ECO:0000250"/>
    <property type="project" value="UniProtKB"/>
</dbReference>
<dbReference type="GO" id="GO:0008353">
    <property type="term" value="F:RNA polymerase II CTD heptapeptide repeat kinase activity"/>
    <property type="evidence" value="ECO:0000318"/>
    <property type="project" value="GO_Central"/>
</dbReference>
<dbReference type="GO" id="GO:0120187">
    <property type="term" value="P:positive regulation of protein localization to chromatin"/>
    <property type="evidence" value="ECO:0000250"/>
    <property type="project" value="UniProtKB"/>
</dbReference>
<dbReference type="GO" id="GO:0045944">
    <property type="term" value="P:positive regulation of transcription by RNA polymerase II"/>
    <property type="evidence" value="ECO:0000250"/>
    <property type="project" value="UniProtKB"/>
</dbReference>
<dbReference type="GO" id="GO:0032968">
    <property type="term" value="P:positive regulation of transcription elongation by RNA polymerase II"/>
    <property type="evidence" value="ECO:0000250"/>
    <property type="project" value="UniProtKB"/>
</dbReference>
<dbReference type="CDD" id="cd07865">
    <property type="entry name" value="STKc_CDK9"/>
    <property type="match status" value="1"/>
</dbReference>
<dbReference type="FunFam" id="1.10.510.10:FF:000203">
    <property type="entry name" value="Cyclin-dependent kinase 9"/>
    <property type="match status" value="1"/>
</dbReference>
<dbReference type="FunFam" id="3.30.200.20:FF:000227">
    <property type="entry name" value="Cyclin-dependent kinase 9"/>
    <property type="match status" value="1"/>
</dbReference>
<dbReference type="Gene3D" id="3.30.200.20">
    <property type="entry name" value="Phosphorylase Kinase, domain 1"/>
    <property type="match status" value="1"/>
</dbReference>
<dbReference type="Gene3D" id="1.10.510.10">
    <property type="entry name" value="Transferase(Phosphotransferase) domain 1"/>
    <property type="match status" value="1"/>
</dbReference>
<dbReference type="InterPro" id="IPR050108">
    <property type="entry name" value="CDK"/>
</dbReference>
<dbReference type="InterPro" id="IPR011009">
    <property type="entry name" value="Kinase-like_dom_sf"/>
</dbReference>
<dbReference type="InterPro" id="IPR000719">
    <property type="entry name" value="Prot_kinase_dom"/>
</dbReference>
<dbReference type="InterPro" id="IPR017441">
    <property type="entry name" value="Protein_kinase_ATP_BS"/>
</dbReference>
<dbReference type="InterPro" id="IPR008271">
    <property type="entry name" value="Ser/Thr_kinase_AS"/>
</dbReference>
<dbReference type="PANTHER" id="PTHR24056">
    <property type="entry name" value="CELL DIVISION PROTEIN KINASE"/>
    <property type="match status" value="1"/>
</dbReference>
<dbReference type="PANTHER" id="PTHR24056:SF233">
    <property type="entry name" value="CYCLIN-DEPENDENT KINASE 9"/>
    <property type="match status" value="1"/>
</dbReference>
<dbReference type="Pfam" id="PF00069">
    <property type="entry name" value="Pkinase"/>
    <property type="match status" value="1"/>
</dbReference>
<dbReference type="SMART" id="SM00220">
    <property type="entry name" value="S_TKc"/>
    <property type="match status" value="1"/>
</dbReference>
<dbReference type="SUPFAM" id="SSF56112">
    <property type="entry name" value="Protein kinase-like (PK-like)"/>
    <property type="match status" value="1"/>
</dbReference>
<dbReference type="PROSITE" id="PS00107">
    <property type="entry name" value="PROTEIN_KINASE_ATP"/>
    <property type="match status" value="1"/>
</dbReference>
<dbReference type="PROSITE" id="PS50011">
    <property type="entry name" value="PROTEIN_KINASE_DOM"/>
    <property type="match status" value="1"/>
</dbReference>
<dbReference type="PROSITE" id="PS00108">
    <property type="entry name" value="PROTEIN_KINASE_ST"/>
    <property type="match status" value="1"/>
</dbReference>
<comment type="function">
    <text evidence="1">Member of the cyclin-dependent kinase pair (CDK9/cyclin-T) complex, also called positive transcription elongation factor B (P-TEFb), which is proposed to facilitate the transition from abortive to production elongation by phosphorylating the CTD (C-terminal domain) of the large subunit of RNA polymerase II (RNAP II) and SUPT5H.</text>
</comment>
<comment type="catalytic activity">
    <reaction>
        <text>L-seryl-[protein] + ATP = O-phospho-L-seryl-[protein] + ADP + H(+)</text>
        <dbReference type="Rhea" id="RHEA:17989"/>
        <dbReference type="Rhea" id="RHEA-COMP:9863"/>
        <dbReference type="Rhea" id="RHEA-COMP:11604"/>
        <dbReference type="ChEBI" id="CHEBI:15378"/>
        <dbReference type="ChEBI" id="CHEBI:29999"/>
        <dbReference type="ChEBI" id="CHEBI:30616"/>
        <dbReference type="ChEBI" id="CHEBI:83421"/>
        <dbReference type="ChEBI" id="CHEBI:456216"/>
        <dbReference type="EC" id="2.7.11.22"/>
    </reaction>
</comment>
<comment type="catalytic activity">
    <reaction>
        <text>L-threonyl-[protein] + ATP = O-phospho-L-threonyl-[protein] + ADP + H(+)</text>
        <dbReference type="Rhea" id="RHEA:46608"/>
        <dbReference type="Rhea" id="RHEA-COMP:11060"/>
        <dbReference type="Rhea" id="RHEA-COMP:11605"/>
        <dbReference type="ChEBI" id="CHEBI:15378"/>
        <dbReference type="ChEBI" id="CHEBI:30013"/>
        <dbReference type="ChEBI" id="CHEBI:30616"/>
        <dbReference type="ChEBI" id="CHEBI:61977"/>
        <dbReference type="ChEBI" id="CHEBI:456216"/>
        <dbReference type="EC" id="2.7.11.22"/>
    </reaction>
</comment>
<comment type="catalytic activity">
    <reaction>
        <text>[DNA-directed RNA polymerase] + ATP = phospho-[DNA-directed RNA polymerase] + ADP + H(+)</text>
        <dbReference type="Rhea" id="RHEA:10216"/>
        <dbReference type="Rhea" id="RHEA-COMP:11321"/>
        <dbReference type="Rhea" id="RHEA-COMP:11322"/>
        <dbReference type="ChEBI" id="CHEBI:15378"/>
        <dbReference type="ChEBI" id="CHEBI:30616"/>
        <dbReference type="ChEBI" id="CHEBI:43176"/>
        <dbReference type="ChEBI" id="CHEBI:68546"/>
        <dbReference type="ChEBI" id="CHEBI:456216"/>
        <dbReference type="EC" id="2.7.11.23"/>
    </reaction>
</comment>
<comment type="subunit">
    <text evidence="1">Associates with cyclin-T to form P-TEFb.</text>
</comment>
<comment type="subcellular location">
    <subcellularLocation>
        <location evidence="1">Nucleus</location>
    </subcellularLocation>
</comment>
<comment type="similarity">
    <text evidence="5">Belongs to the protein kinase superfamily. CMGC Ser/Thr protein kinase family. CDC2/CDKX subfamily.</text>
</comment>
<name>CDK9B_XENLA</name>
<protein>
    <recommendedName>
        <fullName>Cyclin-dependent kinase 9-B</fullName>
        <ecNumber>2.7.11.22</ecNumber>
        <ecNumber>2.7.11.23</ecNumber>
    </recommendedName>
    <alternativeName>
        <fullName>Cell division protein kinase 9-B</fullName>
    </alternativeName>
</protein>
<accession>Q7ZX42</accession>
<evidence type="ECO:0000250" key="1"/>
<evidence type="ECO:0000255" key="2">
    <source>
        <dbReference type="PROSITE-ProRule" id="PRU00159"/>
    </source>
</evidence>
<evidence type="ECO:0000255" key="3">
    <source>
        <dbReference type="PROSITE-ProRule" id="PRU10027"/>
    </source>
</evidence>
<evidence type="ECO:0000256" key="4">
    <source>
        <dbReference type="SAM" id="MobiDB-lite"/>
    </source>
</evidence>
<evidence type="ECO:0000305" key="5"/>
<sequence>MVKNYDSVEFPYCDEVSKYERLAKIGQGTFGEVFKAKHRQTGKKVALKKVLMENEKEGFPITALREIKILQLLKHENVVHLIEICRNKISPTANQYNRCKGTIFLVFDFCEHDLAGLLSNAHVKFTVAEIKKVMQMLLNGLYYIHRNKILHRDMKAANVLITRDGVLKLADFGLARAFSLAKNSQPNKYTNRVVTLWYRPPELLLGERDYGPPIDLWGAGCIMAEMWTRSPIMQGNTEQHQLTLISQLCGSITPEVWPNVDKYELYQKLELPKGQKRKVKERLKAYVKDVCALDLIDKLLILDPAQRTDSDEALNHDFFWSDPMPSDLKNMLSTHNQSMFEYLAPPRRRGGHMPQQPANQARNPAATNQSEFDRVF</sequence>
<reference key="1">
    <citation type="submission" date="2003-01" db="EMBL/GenBank/DDBJ databases">
        <authorList>
            <consortium name="NIH - Xenopus Gene Collection (XGC) project"/>
        </authorList>
    </citation>
    <scope>NUCLEOTIDE SEQUENCE [LARGE SCALE MRNA]</scope>
    <source>
        <tissue>Embryo</tissue>
    </source>
</reference>
<proteinExistence type="evidence at transcript level"/>
<gene>
    <name type="primary">cdk9-b</name>
</gene>
<keyword id="KW-0067">ATP-binding</keyword>
<keyword id="KW-0418">Kinase</keyword>
<keyword id="KW-0547">Nucleotide-binding</keyword>
<keyword id="KW-0539">Nucleus</keyword>
<keyword id="KW-1185">Reference proteome</keyword>
<keyword id="KW-0723">Serine/threonine-protein kinase</keyword>
<keyword id="KW-0804">Transcription</keyword>
<keyword id="KW-0805">Transcription regulation</keyword>
<keyword id="KW-0808">Transferase</keyword>
<feature type="chain" id="PRO_0000085805" description="Cyclin-dependent kinase 9-B">
    <location>
        <begin position="1"/>
        <end position="376"/>
    </location>
</feature>
<feature type="domain" description="Protein kinase" evidence="2">
    <location>
        <begin position="19"/>
        <end position="319"/>
    </location>
</feature>
<feature type="region of interest" description="Disordered" evidence="4">
    <location>
        <begin position="345"/>
        <end position="376"/>
    </location>
</feature>
<feature type="compositionally biased region" description="Low complexity" evidence="4">
    <location>
        <begin position="354"/>
        <end position="369"/>
    </location>
</feature>
<feature type="active site" description="Proton acceptor" evidence="2 3">
    <location>
        <position position="153"/>
    </location>
</feature>
<feature type="binding site" evidence="2">
    <location>
        <begin position="25"/>
        <end position="33"/>
    </location>
    <ligand>
        <name>ATP</name>
        <dbReference type="ChEBI" id="CHEBI:30616"/>
    </ligand>
</feature>
<feature type="binding site" evidence="2">
    <location>
        <position position="48"/>
    </location>
    <ligand>
        <name>ATP</name>
        <dbReference type="ChEBI" id="CHEBI:30616"/>
    </ligand>
</feature>